<proteinExistence type="inferred from homology"/>
<reference key="1">
    <citation type="journal article" date="2011" name="PLoS Pathog.">
        <title>Comparative genomics yields insights into niche adaptation of plant vascular wilt pathogens.</title>
        <authorList>
            <person name="Klosterman S.J."/>
            <person name="Subbarao K.V."/>
            <person name="Kang S."/>
            <person name="Veronese P."/>
            <person name="Gold S.E."/>
            <person name="Thomma B.P.H.J."/>
            <person name="Chen Z."/>
            <person name="Henrissat B."/>
            <person name="Lee Y.-H."/>
            <person name="Park J."/>
            <person name="Garcia-Pedrajas M.D."/>
            <person name="Barbara D.J."/>
            <person name="Anchieta A."/>
            <person name="de Jonge R."/>
            <person name="Santhanam P."/>
            <person name="Maruthachalam K."/>
            <person name="Atallah Z."/>
            <person name="Amyotte S.G."/>
            <person name="Paz Z."/>
            <person name="Inderbitzin P."/>
            <person name="Hayes R.J."/>
            <person name="Heiman D.I."/>
            <person name="Young S."/>
            <person name="Zeng Q."/>
            <person name="Engels R."/>
            <person name="Galagan J."/>
            <person name="Cuomo C.A."/>
            <person name="Dobinson K.F."/>
            <person name="Ma L.-J."/>
        </authorList>
    </citation>
    <scope>NUCLEOTIDE SEQUENCE [LARGE SCALE GENOMIC DNA]</scope>
    <source>
        <strain>VdLs.17 / ATCC MYA-4575 / FGSC 10137</strain>
    </source>
</reference>
<reference key="2">
    <citation type="journal article" date="2017" name="Mol. Plant Pathol.">
        <title>Verticillium dahliae LysM effectors differentially contribute to virulence on plant hosts.</title>
        <authorList>
            <person name="Kombrink A."/>
            <person name="Rovenich H."/>
            <person name="Shi-Kunne X."/>
            <person name="Rojas-Padilla E."/>
            <person name="van den Berg G.C."/>
            <person name="Domazakis E."/>
            <person name="de Jonge R."/>
            <person name="Valkenburg D.J."/>
            <person name="Sanchez-Vallet A."/>
            <person name="Seidl M.F."/>
            <person name="Thomma B.P."/>
        </authorList>
    </citation>
    <scope>FUNCTION</scope>
    <scope>DOMAIN</scope>
    <scope>DISRUPTION PHENOTYPE</scope>
</reference>
<accession>G2XA95</accession>
<comment type="function">
    <text evidence="4 7">Might have a role in sequestration of chitin oligosaccharides (breakdown products of fungal cell walls that are released during invasion and act as triggers of host immunity) to dampen host defense (Probable). Does not play an important role during host colonization (PubMed:27911046).</text>
</comment>
<comment type="domain">
    <text evidence="7">The LysM (lysin motif) domains are small globular domains involved in binding chitin in eukaryotes. Vd6LysM contains 6 LysM domains.</text>
</comment>
<comment type="disruption phenotype">
    <text evidence="4">Does not affect virulence on Arabidopsis, N.benthamiana and tomato.</text>
</comment>
<comment type="miscellaneous">
    <text evidence="6">In plants, chitin acts as a microbe-associated molecular pattern (MAMP) that is recognized by lysin motif (LysM)-containing plant cell surface-localized pattern recognition receptors (PRRs) that activate a plethora of downstream immune responses.</text>
</comment>
<comment type="similarity">
    <text evidence="6">Belongs to the secreted LysM effector family.</text>
</comment>
<feature type="signal peptide" evidence="1">
    <location>
        <begin position="1"/>
        <end position="19"/>
    </location>
</feature>
<feature type="chain" id="PRO_5003439103" description="Secreted LysM effector Vd6LysM">
    <location>
        <begin position="20"/>
        <end position="513"/>
    </location>
</feature>
<feature type="domain" description="LysM 1" evidence="2">
    <location>
        <begin position="38"/>
        <end position="85"/>
    </location>
</feature>
<feature type="domain" description="LysM 2" evidence="2">
    <location>
        <begin position="136"/>
        <end position="182"/>
    </location>
</feature>
<feature type="domain" description="LysM 3" evidence="2">
    <location>
        <begin position="219"/>
        <end position="265"/>
    </location>
</feature>
<feature type="domain" description="LysM 4" evidence="2">
    <location>
        <begin position="302"/>
        <end position="348"/>
    </location>
</feature>
<feature type="domain" description="LysM 5" evidence="2">
    <location>
        <begin position="387"/>
        <end position="433"/>
    </location>
</feature>
<feature type="domain" description="LysM 6" evidence="2">
    <location>
        <begin position="465"/>
        <end position="511"/>
    </location>
</feature>
<feature type="region of interest" description="Disordered" evidence="3">
    <location>
        <begin position="357"/>
        <end position="377"/>
    </location>
</feature>
<feature type="compositionally biased region" description="Low complexity" evidence="3">
    <location>
        <begin position="357"/>
        <end position="367"/>
    </location>
</feature>
<protein>
    <recommendedName>
        <fullName evidence="5">Secreted LysM effector Vd6LysM</fullName>
    </recommendedName>
    <alternativeName>
        <fullName evidence="5">LysM domain-containing protein Vd6LysM</fullName>
    </alternativeName>
    <alternativeName>
        <fullName evidence="5">Six LysM domain-containing protein</fullName>
    </alternativeName>
</protein>
<keyword id="KW-0147">Chitin-binding</keyword>
<keyword id="KW-1185">Reference proteome</keyword>
<keyword id="KW-0677">Repeat</keyword>
<keyword id="KW-0732">Signal</keyword>
<keyword id="KW-0843">Virulence</keyword>
<evidence type="ECO:0000255" key="1"/>
<evidence type="ECO:0000255" key="2">
    <source>
        <dbReference type="PROSITE-ProRule" id="PRU01118"/>
    </source>
</evidence>
<evidence type="ECO:0000256" key="3">
    <source>
        <dbReference type="SAM" id="MobiDB-lite"/>
    </source>
</evidence>
<evidence type="ECO:0000269" key="4">
    <source>
    </source>
</evidence>
<evidence type="ECO:0000303" key="5">
    <source>
    </source>
</evidence>
<evidence type="ECO:0000305" key="6"/>
<evidence type="ECO:0000305" key="7">
    <source>
    </source>
</evidence>
<sequence>MSFIKSLLLAAAAVASVSARRGPEPKYPPAAGTSSYCSYWVDYEGDKSCSRVLEDNVVVLKDFARWNPTVGADCSGIKAGNSYCVEAFGEPEPIEVTTTTRAATTTTQPTATTTTFANGIATPQPTQSGMVTNCNKFHWIAEGVSCSQVISFQKITLADFVKWNPSVKSDCSGMWAGVNVCVGVVGSSTDTAKPTTTAPSNGVVTPQPTQPSMVTNCNKFHWIAKGVTCQQVISYQKISLADFVKWNPSVLSDCSGMWAEVQVCVGVIGSTPTTLATTTTTAGNGVSTPLPTQPGMVTNCAKFHWVAKGVTCNQIYSFQKITLEQFVSYNPTVKSDCSGMQAEVQVCVGLIAGTTPTTTRPPTTTAPGNGVSTPQPTQPGMVTNCAKFHWVAKGVTCNQIYSFQKITLEQFVSFNPTVKSDCTGMQAEVNVCVGLIGGNPTPTQTGNGIATPTPIQPGMVSNCKKFHWIAQGVTCQQVISFQKITLADFVKWNTGVGSDCRTMWAETNVCVGV</sequence>
<organism>
    <name type="scientific">Verticillium dahliae (strain VdLs.17 / ATCC MYA-4575 / FGSC 10137)</name>
    <name type="common">Verticillium wilt</name>
    <dbReference type="NCBI Taxonomy" id="498257"/>
    <lineage>
        <taxon>Eukaryota</taxon>
        <taxon>Fungi</taxon>
        <taxon>Dikarya</taxon>
        <taxon>Ascomycota</taxon>
        <taxon>Pezizomycotina</taxon>
        <taxon>Sordariomycetes</taxon>
        <taxon>Hypocreomycetidae</taxon>
        <taxon>Glomerellales</taxon>
        <taxon>Plectosphaerellaceae</taxon>
        <taxon>Verticillium</taxon>
    </lineage>
</organism>
<dbReference type="EMBL" id="DS572709">
    <property type="protein sequence ID" value="EGY15834.1"/>
    <property type="molecule type" value="Genomic_DNA"/>
</dbReference>
<dbReference type="RefSeq" id="XP_009654198.1">
    <property type="nucleotide sequence ID" value="XM_009655903.1"/>
</dbReference>
<dbReference type="STRING" id="498257.G2XA95"/>
<dbReference type="EnsemblFungi" id="EGY15834">
    <property type="protein sequence ID" value="EGY15834"/>
    <property type="gene ID" value="VDAG_06998"/>
</dbReference>
<dbReference type="GeneID" id="20708461"/>
<dbReference type="KEGG" id="vda:VDAG_06998"/>
<dbReference type="eggNOG" id="KOG2806">
    <property type="taxonomic scope" value="Eukaryota"/>
</dbReference>
<dbReference type="HOGENOM" id="CLU_010591_8_1_1"/>
<dbReference type="InParanoid" id="G2XA95"/>
<dbReference type="OMA" id="NSGCTNI"/>
<dbReference type="OrthoDB" id="22140at1028384"/>
<dbReference type="PHI-base" id="PHI:6833"/>
<dbReference type="Proteomes" id="UP000001611">
    <property type="component" value="Chromosome 5"/>
</dbReference>
<dbReference type="GO" id="GO:0008061">
    <property type="term" value="F:chitin binding"/>
    <property type="evidence" value="ECO:0007669"/>
    <property type="project" value="UniProtKB-KW"/>
</dbReference>
<dbReference type="Gene3D" id="3.10.350.10">
    <property type="entry name" value="LysM domain"/>
    <property type="match status" value="6"/>
</dbReference>
<dbReference type="InterPro" id="IPR052210">
    <property type="entry name" value="LysM1-like"/>
</dbReference>
<dbReference type="InterPro" id="IPR018392">
    <property type="entry name" value="LysM_dom"/>
</dbReference>
<dbReference type="InterPro" id="IPR036779">
    <property type="entry name" value="LysM_dom_sf"/>
</dbReference>
<dbReference type="PANTHER" id="PTHR34997">
    <property type="entry name" value="AM15"/>
    <property type="match status" value="1"/>
</dbReference>
<dbReference type="PANTHER" id="PTHR34997:SF2">
    <property type="entry name" value="LYSM DOMAIN-CONTAINING PROTEIN-RELATED"/>
    <property type="match status" value="1"/>
</dbReference>
<dbReference type="PROSITE" id="PS51782">
    <property type="entry name" value="LYSM"/>
    <property type="match status" value="5"/>
</dbReference>
<name>LYSM6_VERDV</name>
<gene>
    <name evidence="5" type="primary">Vd6LysM</name>
    <name type="ORF">VDAG_06998</name>
</gene>